<organism>
    <name type="scientific">Mus musculus</name>
    <name type="common">Mouse</name>
    <dbReference type="NCBI Taxonomy" id="10090"/>
    <lineage>
        <taxon>Eukaryota</taxon>
        <taxon>Metazoa</taxon>
        <taxon>Chordata</taxon>
        <taxon>Craniata</taxon>
        <taxon>Vertebrata</taxon>
        <taxon>Euteleostomi</taxon>
        <taxon>Mammalia</taxon>
        <taxon>Eutheria</taxon>
        <taxon>Euarchontoglires</taxon>
        <taxon>Glires</taxon>
        <taxon>Rodentia</taxon>
        <taxon>Myomorpha</taxon>
        <taxon>Muroidea</taxon>
        <taxon>Muridae</taxon>
        <taxon>Murinae</taxon>
        <taxon>Mus</taxon>
        <taxon>Mus</taxon>
    </lineage>
</organism>
<comment type="cofactor">
    <cofactor evidence="1">
        <name>Zn(2+)</name>
        <dbReference type="ChEBI" id="CHEBI:29105"/>
    </cofactor>
    <text evidence="1">Binds 1 zinc ion per subunit.</text>
</comment>
<comment type="subcellular location">
    <subcellularLocation>
        <location evidence="1">Secreted</location>
        <location evidence="1">Extracellular space</location>
        <location evidence="1">Extracellular matrix</location>
    </subcellularLocation>
</comment>
<comment type="alternative products">
    <event type="alternative splicing"/>
    <isoform>
        <id>Q69Z28-1</id>
        <name>1</name>
        <sequence type="displayed"/>
    </isoform>
    <isoform>
        <id>Q69Z28-2</id>
        <name>2</name>
        <sequence type="described" ref="VSP_014991 VSP_014992"/>
    </isoform>
</comment>
<comment type="domain">
    <text evidence="1">The spacer domain and the TSP type-1 domains are important for a tight interaction with the extracellular matrix.</text>
</comment>
<comment type="domain">
    <text>The conserved cysteine present in the cysteine-switch motif binds the catalytic zinc ion, thus inhibiting the enzyme. The dissociation of the cysteine from the zinc ion upon the activation-peptide release activates the enzyme.</text>
</comment>
<comment type="PTM">
    <text evidence="1">The precursor is cleaved by a furin endopeptidase.</text>
</comment>
<comment type="PTM">
    <text evidence="1">Glycosylated. Can be O-fucosylated by POFUT2 on a serine or a threonine residue found within the consensus sequence C1-X(2)-(S/T)-C2-G of the TSP type-1 repeat domains where C1 and C2 are the first and second cysteine residue of the repeat, respectively. Fucosylated repeats can then be further glycosylated by the addition of a beta-1,3-glucose residue by the glucosyltransferase, B3GALTL. Fucosylation mediates the efficient secretion of ADAMTS family members. Can also be C-glycosylated with one or two mannose molecules on tryptophan residues within the consensus sequence W-X-X-W of the TPRs, and N-glycosylated. These other glycosylations can also facilitate secretion (By similarity).</text>
</comment>
<sequence length="1222" mass="136282">MESRGCAALWVLLLAQVSEQQTPACALGLAAAASGSPEDPQPPPFSGSSWLETGEYDLVSAYEVDHRGDYVSHDIMHYQRRRRRRAVTQPGGDALHLRLKGPRHDLHLDLKAASNLMAPGFMVQTLGKGGTKSVQMFPPEENCFYQGSLRSQGNSSVALSTCQGLLGMIRTKDTDYFLKPLPPHLTSKLNRSAQGDSPSHVLYKRSTERQAPRENEVLMITRKRDLARPHLHHDNFHLGPSQKQHFCGRRKKYMPQPPNDDLYILPDEYKPSSRHKRSLLKSHRNEELNVETLVVVDRKMMQSHGHENITTYVLTILNMVSALFKDGTIGGNINIVIVGLILLEDEQPGLAISHHADHTLTSFCQWQSGLMGKDGTRHDHAILLTGLDICSWKNEPCDTLGFAPISGMCSKYRSCTVNEDSGLGLAFTIAHESGHNFGMVHDGEGNMCKKSEGNIMSPTLAGRNGVFSWSSCSRQYLHKFLSTAQAICLADQPKPVKEYKYPEKLPGQLYDANTQCKWQFGEKAKLCMLDFRKDICKALWCHRIGRKCETKFMPAAEGTLCGQDMWCRGGQCVKYGDEGPKPTHGHWSDWSPWSPCSRTCGGGISHRDRLCTNPRPSHGGKFCQGSTRTLKLCNSQRCPLDSVDFRAAQCAEYNSKRFRGWLYKWKPYTQLEDQDLCKLYCIAEGFDFFFSLSNKVKDGTPCSEDSRNVCIDGMCERVGCDNVLGSDATEDSCGVCKGNNSDCVTHRGLYSKHHSTNQYYHMVTIPSGARSIHIYETNISTSYISVRNSLKRYYLNGHWSVDWPGRYKFSGATFNYKRSYKEPENLTSPGPTNETLIVELLFQGRNPGVAWEFSLPRSGAKKTPAAQPSYSWAIVRSECSVSCGGGKMNSKAGCYRDLKVPVNASFCNPKTRPVTGLVPCKVSPCPSSWSVGNWSVCSRTCGGGTQSRPVRCTRRAHYRDESIPASLCPQPEPPIHQACNSQSCPPAWSTGPWAECSRTCGKGWRKRTVACKSTNPSARAQLLHDTACTSEPKPRTHEICLLKRCHKHKKLQWLVSAWSQCSVTCQGGTQQRVLRCAEKYISGKYRELASKKCLHLPKPDLELERACGLIPCPKHPPFDASGSPRGSWFASPWSQCTASCGGGVQRRTVQCLLRGQPASDCFLHEKPETSSACNTHFCPIAEKRGTFCKDLFHWCYLVPQHGMCGHRFYSKQCCNTCSKSNL</sequence>
<name>ATS16_MOUSE</name>
<keyword id="KW-0025">Alternative splicing</keyword>
<keyword id="KW-0165">Cleavage on pair of basic residues</keyword>
<keyword id="KW-1015">Disulfide bond</keyword>
<keyword id="KW-0272">Extracellular matrix</keyword>
<keyword id="KW-0325">Glycoprotein</keyword>
<keyword id="KW-0378">Hydrolase</keyword>
<keyword id="KW-0479">Metal-binding</keyword>
<keyword id="KW-0482">Metalloprotease</keyword>
<keyword id="KW-0645">Protease</keyword>
<keyword id="KW-1185">Reference proteome</keyword>
<keyword id="KW-0677">Repeat</keyword>
<keyword id="KW-0964">Secreted</keyword>
<keyword id="KW-0732">Signal</keyword>
<keyword id="KW-0862">Zinc</keyword>
<keyword id="KW-0865">Zymogen</keyword>
<evidence type="ECO:0000250" key="1"/>
<evidence type="ECO:0000255" key="2"/>
<evidence type="ECO:0000255" key="3">
    <source>
        <dbReference type="PROSITE-ProRule" id="PRU00210"/>
    </source>
</evidence>
<evidence type="ECO:0000255" key="4">
    <source>
        <dbReference type="PROSITE-ProRule" id="PRU00233"/>
    </source>
</evidence>
<evidence type="ECO:0000255" key="5">
    <source>
        <dbReference type="PROSITE-ProRule" id="PRU00276"/>
    </source>
</evidence>
<evidence type="ECO:0000303" key="6">
    <source>
    </source>
</evidence>
<feature type="signal peptide" evidence="2">
    <location>
        <begin position="1"/>
        <end position="20"/>
    </location>
</feature>
<feature type="propeptide" id="PRO_0000029196" evidence="1">
    <location>
        <begin position="21"/>
        <end position="277"/>
    </location>
</feature>
<feature type="chain" id="PRO_0000029197" description="A disintegrin and metalloproteinase with thrombospondin motifs 16">
    <location>
        <begin position="278"/>
        <end position="1222"/>
    </location>
</feature>
<feature type="domain" description="Peptidase M12B" evidence="5">
    <location>
        <begin position="288"/>
        <end position="493"/>
    </location>
</feature>
<feature type="domain" description="Disintegrin">
    <location>
        <begin position="494"/>
        <end position="583"/>
    </location>
</feature>
<feature type="domain" description="TSP type-1 1" evidence="3">
    <location>
        <begin position="584"/>
        <end position="639"/>
    </location>
</feature>
<feature type="domain" description="TSP type-1 2" evidence="3">
    <location>
        <begin position="872"/>
        <end position="920"/>
    </location>
</feature>
<feature type="domain" description="TSP type-1 3" evidence="3">
    <location>
        <begin position="925"/>
        <end position="985"/>
    </location>
</feature>
<feature type="domain" description="TSP type-1 4" evidence="3">
    <location>
        <begin position="986"/>
        <end position="1046"/>
    </location>
</feature>
<feature type="domain" description="TSP type-1 5" evidence="3">
    <location>
        <begin position="1049"/>
        <end position="1113"/>
    </location>
</feature>
<feature type="domain" description="TSP type-1 6" evidence="3">
    <location>
        <begin position="1125"/>
        <end position="1179"/>
    </location>
</feature>
<feature type="domain" description="PLAC" evidence="4">
    <location>
        <begin position="1184"/>
        <end position="1221"/>
    </location>
</feature>
<feature type="region of interest" description="Spacer">
    <location>
        <begin position="745"/>
        <end position="871"/>
    </location>
</feature>
<feature type="short sequence motif" description="Cysteine switch" evidence="1">
    <location>
        <begin position="245"/>
        <end position="253"/>
    </location>
</feature>
<feature type="active site" evidence="5">
    <location>
        <position position="432"/>
    </location>
</feature>
<feature type="binding site" description="in inhibited form" evidence="1">
    <location>
        <position position="247"/>
    </location>
    <ligand>
        <name>Zn(2+)</name>
        <dbReference type="ChEBI" id="CHEBI:29105"/>
        <note>catalytic</note>
    </ligand>
</feature>
<feature type="binding site" evidence="5">
    <location>
        <position position="431"/>
    </location>
    <ligand>
        <name>Zn(2+)</name>
        <dbReference type="ChEBI" id="CHEBI:29105"/>
        <note>catalytic</note>
    </ligand>
</feature>
<feature type="binding site" evidence="5">
    <location>
        <position position="435"/>
    </location>
    <ligand>
        <name>Zn(2+)</name>
        <dbReference type="ChEBI" id="CHEBI:29105"/>
        <note>catalytic</note>
    </ligand>
</feature>
<feature type="binding site" evidence="5">
    <location>
        <position position="441"/>
    </location>
    <ligand>
        <name>Zn(2+)</name>
        <dbReference type="ChEBI" id="CHEBI:29105"/>
        <note>catalytic</note>
    </ligand>
</feature>
<feature type="glycosylation site" description="N-linked (GlcNAc...) asparagine" evidence="2">
    <location>
        <position position="154"/>
    </location>
</feature>
<feature type="glycosylation site" description="N-linked (GlcNAc...) asparagine" evidence="2">
    <location>
        <position position="190"/>
    </location>
</feature>
<feature type="glycosylation site" description="N-linked (GlcNAc...) asparagine" evidence="2">
    <location>
        <position position="308"/>
    </location>
</feature>
<feature type="glycosylation site" description="N-linked (GlcNAc...) asparagine" evidence="2">
    <location>
        <position position="739"/>
    </location>
</feature>
<feature type="glycosylation site" description="N-linked (GlcNAc...) asparagine" evidence="2">
    <location>
        <position position="778"/>
    </location>
</feature>
<feature type="glycosylation site" description="N-linked (GlcNAc...) asparagine" evidence="2">
    <location>
        <position position="825"/>
    </location>
</feature>
<feature type="glycosylation site" description="N-linked (GlcNAc...) asparagine" evidence="2">
    <location>
        <position position="833"/>
    </location>
</feature>
<feature type="glycosylation site" description="N-linked (GlcNAc...) asparagine" evidence="2">
    <location>
        <position position="903"/>
    </location>
</feature>
<feature type="glycosylation site" description="N-linked (GlcNAc...) asparagine" evidence="2">
    <location>
        <position position="933"/>
    </location>
</feature>
<feature type="disulfide bond" evidence="1">
    <location>
        <begin position="364"/>
        <end position="415"/>
    </location>
</feature>
<feature type="disulfide bond" evidence="1">
    <location>
        <begin position="390"/>
        <end position="397"/>
    </location>
</feature>
<feature type="disulfide bond" evidence="1">
    <location>
        <begin position="409"/>
        <end position="488"/>
    </location>
</feature>
<feature type="disulfide bond" evidence="1">
    <location>
        <begin position="448"/>
        <end position="472"/>
    </location>
</feature>
<feature type="disulfide bond" evidence="1">
    <location>
        <begin position="516"/>
        <end position="541"/>
    </location>
</feature>
<feature type="disulfide bond" evidence="1">
    <location>
        <begin position="527"/>
        <end position="548"/>
    </location>
</feature>
<feature type="disulfide bond" evidence="1">
    <location>
        <begin position="536"/>
        <end position="567"/>
    </location>
</feature>
<feature type="disulfide bond" evidence="1">
    <location>
        <begin position="561"/>
        <end position="572"/>
    </location>
</feature>
<feature type="disulfide bond" evidence="1">
    <location>
        <begin position="596"/>
        <end position="633"/>
    </location>
</feature>
<feature type="disulfide bond" evidence="1">
    <location>
        <begin position="600"/>
        <end position="638"/>
    </location>
</feature>
<feature type="disulfide bond" evidence="1">
    <location>
        <begin position="611"/>
        <end position="623"/>
    </location>
</feature>
<feature type="splice variant" id="VSP_014991" description="In isoform 2." evidence="6">
    <original>GKMNSKAGCYRDLKV</original>
    <variation>DRQCQTGRGHLEISS</variation>
    <location>
        <begin position="886"/>
        <end position="900"/>
    </location>
</feature>
<feature type="splice variant" id="VSP_014992" description="In isoform 2." evidence="6">
    <location>
        <begin position="901"/>
        <end position="1222"/>
    </location>
</feature>
<protein>
    <recommendedName>
        <fullName>A disintegrin and metalloproteinase with thrombospondin motifs 16</fullName>
        <shortName>ADAM-TS 16</shortName>
        <shortName>ADAM-TS16</shortName>
        <shortName>ADAMTS-16</shortName>
        <ecNumber>3.4.24.-</ecNumber>
    </recommendedName>
</protein>
<accession>Q69Z28</accession>
<accession>Q8K206</accession>
<proteinExistence type="evidence at transcript level"/>
<reference key="1">
    <citation type="journal article" date="2004" name="DNA Res.">
        <title>Prediction of the coding sequences of mouse homologues of KIAA gene: IV. The complete nucleotide sequences of 500 mouse KIAA-homologous cDNAs identified by screening of terminal sequences of cDNA clones randomly sampled from size-fractionated libraries.</title>
        <authorList>
            <person name="Okazaki N."/>
            <person name="Kikuno R."/>
            <person name="Ohara R."/>
            <person name="Inamoto S."/>
            <person name="Koseki H."/>
            <person name="Hiraoka S."/>
            <person name="Saga Y."/>
            <person name="Seino S."/>
            <person name="Nishimura M."/>
            <person name="Kaisho T."/>
            <person name="Hoshino K."/>
            <person name="Kitamura H."/>
            <person name="Nagase T."/>
            <person name="Ohara O."/>
            <person name="Koga H."/>
        </authorList>
    </citation>
    <scope>NUCLEOTIDE SEQUENCE [LARGE SCALE MRNA] (ISOFORM 1)</scope>
    <source>
        <tissue>Embryonic intestine</tissue>
    </source>
</reference>
<reference key="2">
    <citation type="journal article" date="2004" name="Genome Res.">
        <title>The status, quality, and expansion of the NIH full-length cDNA project: the Mammalian Gene Collection (MGC).</title>
        <authorList>
            <consortium name="The MGC Project Team"/>
        </authorList>
    </citation>
    <scope>NUCLEOTIDE SEQUENCE [LARGE SCALE MRNA] (ISOFORM 2)</scope>
    <source>
        <tissue>Mammary gland</tissue>
    </source>
</reference>
<gene>
    <name type="primary">Adamts16</name>
    <name type="synonym">Kiaa2029</name>
</gene>
<dbReference type="EC" id="3.4.24.-"/>
<dbReference type="EMBL" id="AK173338">
    <property type="protein sequence ID" value="BAD32616.1"/>
    <property type="molecule type" value="mRNA"/>
</dbReference>
<dbReference type="EMBL" id="BC034739">
    <property type="protein sequence ID" value="AAH34739.1"/>
    <property type="molecule type" value="mRNA"/>
</dbReference>
<dbReference type="CCDS" id="CCDS36723.1">
    <molecule id="Q69Z28-1"/>
</dbReference>
<dbReference type="RefSeq" id="NP_742050.2">
    <molecule id="Q69Z28-1"/>
    <property type="nucleotide sequence ID" value="NM_172053.4"/>
</dbReference>
<dbReference type="SMR" id="Q69Z28"/>
<dbReference type="BioGRID" id="234828">
    <property type="interactions" value="1"/>
</dbReference>
<dbReference type="FunCoup" id="Q69Z28">
    <property type="interactions" value="38"/>
</dbReference>
<dbReference type="STRING" id="10090.ENSMUSP00000079041"/>
<dbReference type="MEROPS" id="M12.026"/>
<dbReference type="GlyCosmos" id="Q69Z28">
    <property type="glycosylation" value="9 sites, No reported glycans"/>
</dbReference>
<dbReference type="GlyGen" id="Q69Z28">
    <property type="glycosylation" value="10 sites, 1 O-linked glycan (1 site)"/>
</dbReference>
<dbReference type="iPTMnet" id="Q69Z28"/>
<dbReference type="PhosphoSitePlus" id="Q69Z28"/>
<dbReference type="SwissPalm" id="Q69Z28"/>
<dbReference type="PaxDb" id="10090-ENSMUSP00000079041"/>
<dbReference type="Antibodypedia" id="59056">
    <property type="antibodies" value="51 antibodies from 15 providers"/>
</dbReference>
<dbReference type="DNASU" id="271127"/>
<dbReference type="Ensembl" id="ENSMUST00000080145.13">
    <molecule id="Q69Z28-1"/>
    <property type="protein sequence ID" value="ENSMUSP00000079041.7"/>
    <property type="gene ID" value="ENSMUSG00000049538.15"/>
</dbReference>
<dbReference type="Ensembl" id="ENSMUST00000109694.3">
    <molecule id="Q69Z28-2"/>
    <property type="protein sequence ID" value="ENSMUSP00000105316.3"/>
    <property type="gene ID" value="ENSMUSG00000049538.15"/>
</dbReference>
<dbReference type="GeneID" id="271127"/>
<dbReference type="KEGG" id="mmu:271127"/>
<dbReference type="UCSC" id="uc007rcz.1">
    <molecule id="Q69Z28-1"/>
    <property type="organism name" value="mouse"/>
</dbReference>
<dbReference type="AGR" id="MGI:2429637"/>
<dbReference type="CTD" id="170690"/>
<dbReference type="MGI" id="MGI:2429637">
    <property type="gene designation" value="Adamts16"/>
</dbReference>
<dbReference type="VEuPathDB" id="HostDB:ENSMUSG00000049538"/>
<dbReference type="eggNOG" id="KOG3538">
    <property type="taxonomic scope" value="Eukaryota"/>
</dbReference>
<dbReference type="GeneTree" id="ENSGT00940000159433"/>
<dbReference type="HOGENOM" id="CLU_000660_1_0_1"/>
<dbReference type="InParanoid" id="Q69Z28"/>
<dbReference type="OMA" id="LRCAEKY"/>
<dbReference type="OrthoDB" id="10035764at2759"/>
<dbReference type="PhylomeDB" id="Q69Z28"/>
<dbReference type="TreeFam" id="TF313537"/>
<dbReference type="Reactome" id="R-MMU-5173214">
    <property type="pathway name" value="O-glycosylation of TSR domain-containing proteins"/>
</dbReference>
<dbReference type="BioGRID-ORCS" id="271127">
    <property type="hits" value="1 hit in 79 CRISPR screens"/>
</dbReference>
<dbReference type="PRO" id="PR:Q69Z28"/>
<dbReference type="Proteomes" id="UP000000589">
    <property type="component" value="Chromosome 13"/>
</dbReference>
<dbReference type="RNAct" id="Q69Z28">
    <property type="molecule type" value="protein"/>
</dbReference>
<dbReference type="Bgee" id="ENSMUSG00000049538">
    <property type="expression patterns" value="Expressed in efferent duct and 96 other cell types or tissues"/>
</dbReference>
<dbReference type="ExpressionAtlas" id="Q69Z28">
    <property type="expression patterns" value="baseline and differential"/>
</dbReference>
<dbReference type="GO" id="GO:0005576">
    <property type="term" value="C:extracellular region"/>
    <property type="evidence" value="ECO:0007669"/>
    <property type="project" value="UniProtKB-KW"/>
</dbReference>
<dbReference type="GO" id="GO:0046872">
    <property type="term" value="F:metal ion binding"/>
    <property type="evidence" value="ECO:0007669"/>
    <property type="project" value="UniProtKB-KW"/>
</dbReference>
<dbReference type="GO" id="GO:0004222">
    <property type="term" value="F:metalloendopeptidase activity"/>
    <property type="evidence" value="ECO:0007669"/>
    <property type="project" value="InterPro"/>
</dbReference>
<dbReference type="GO" id="GO:0001658">
    <property type="term" value="P:branching involved in ureteric bud morphogenesis"/>
    <property type="evidence" value="ECO:0000315"/>
    <property type="project" value="MGI"/>
</dbReference>
<dbReference type="GO" id="GO:0030198">
    <property type="term" value="P:extracellular matrix organization"/>
    <property type="evidence" value="ECO:0007669"/>
    <property type="project" value="InterPro"/>
</dbReference>
<dbReference type="GO" id="GO:0048232">
    <property type="term" value="P:male gamete generation"/>
    <property type="evidence" value="ECO:0007669"/>
    <property type="project" value="Ensembl"/>
</dbReference>
<dbReference type="GO" id="GO:0006508">
    <property type="term" value="P:proteolysis"/>
    <property type="evidence" value="ECO:0007669"/>
    <property type="project" value="UniProtKB-KW"/>
</dbReference>
<dbReference type="GO" id="GO:1902017">
    <property type="term" value="P:regulation of cilium assembly"/>
    <property type="evidence" value="ECO:0007669"/>
    <property type="project" value="Ensembl"/>
</dbReference>
<dbReference type="GO" id="GO:0003073">
    <property type="term" value="P:regulation of systemic arterial blood pressure"/>
    <property type="evidence" value="ECO:0007669"/>
    <property type="project" value="Ensembl"/>
</dbReference>
<dbReference type="CDD" id="cd04273">
    <property type="entry name" value="ZnMc_ADAMTS_like"/>
    <property type="match status" value="1"/>
</dbReference>
<dbReference type="FunFam" id="2.60.120.830:FF:000001">
    <property type="entry name" value="A disintegrin and metalloproteinase with thrombospondin motifs 1"/>
    <property type="match status" value="1"/>
</dbReference>
<dbReference type="FunFam" id="3.40.390.10:FF:000001">
    <property type="entry name" value="A disintegrin and metalloproteinase with thrombospondin motifs 1"/>
    <property type="match status" value="1"/>
</dbReference>
<dbReference type="FunFam" id="3.40.1620.60:FF:000002">
    <property type="entry name" value="A disintegrin and metalloproteinase with thrombospondin motifs 10"/>
    <property type="match status" value="1"/>
</dbReference>
<dbReference type="FunFam" id="2.20.100.10:FF:000007">
    <property type="entry name" value="Thrombospondin 1"/>
    <property type="match status" value="1"/>
</dbReference>
<dbReference type="Gene3D" id="2.60.120.830">
    <property type="match status" value="1"/>
</dbReference>
<dbReference type="Gene3D" id="3.40.1620.60">
    <property type="match status" value="1"/>
</dbReference>
<dbReference type="Gene3D" id="3.40.390.10">
    <property type="entry name" value="Collagenase (Catalytic Domain)"/>
    <property type="match status" value="1"/>
</dbReference>
<dbReference type="Gene3D" id="2.20.100.10">
    <property type="entry name" value="Thrombospondin type-1 (TSP1) repeat"/>
    <property type="match status" value="5"/>
</dbReference>
<dbReference type="InterPro" id="IPR013273">
    <property type="entry name" value="ADAMTS/ADAMTS-like"/>
</dbReference>
<dbReference type="InterPro" id="IPR050439">
    <property type="entry name" value="ADAMTS_ADAMTS-like"/>
</dbReference>
<dbReference type="InterPro" id="IPR041645">
    <property type="entry name" value="ADAMTS_CR_2"/>
</dbReference>
<dbReference type="InterPro" id="IPR045371">
    <property type="entry name" value="ADAMTS_CR_3"/>
</dbReference>
<dbReference type="InterPro" id="IPR010294">
    <property type="entry name" value="ADAMTS_spacer1"/>
</dbReference>
<dbReference type="InterPro" id="IPR024079">
    <property type="entry name" value="MetalloPept_cat_dom_sf"/>
</dbReference>
<dbReference type="InterPro" id="IPR001590">
    <property type="entry name" value="Peptidase_M12B"/>
</dbReference>
<dbReference type="InterPro" id="IPR002870">
    <property type="entry name" value="Peptidase_M12B_N"/>
</dbReference>
<dbReference type="InterPro" id="IPR010909">
    <property type="entry name" value="PLAC"/>
</dbReference>
<dbReference type="InterPro" id="IPR000884">
    <property type="entry name" value="TSP1_rpt"/>
</dbReference>
<dbReference type="InterPro" id="IPR036383">
    <property type="entry name" value="TSP1_rpt_sf"/>
</dbReference>
<dbReference type="PANTHER" id="PTHR13723:SF140">
    <property type="entry name" value="A DISINTEGRIN AND METALLOPROTEINASE WITH THROMBOSPONDIN MOTIFS 16"/>
    <property type="match status" value="1"/>
</dbReference>
<dbReference type="PANTHER" id="PTHR13723">
    <property type="entry name" value="ADAMTS A DISINTEGRIN AND METALLOPROTEASE WITH THROMBOSPONDIN MOTIFS PROTEASE"/>
    <property type="match status" value="1"/>
</dbReference>
<dbReference type="Pfam" id="PF17771">
    <property type="entry name" value="ADAMTS_CR_2"/>
    <property type="match status" value="1"/>
</dbReference>
<dbReference type="Pfam" id="PF19236">
    <property type="entry name" value="ADAMTS_CR_3"/>
    <property type="match status" value="1"/>
</dbReference>
<dbReference type="Pfam" id="PF05986">
    <property type="entry name" value="ADAMTS_spacer1"/>
    <property type="match status" value="1"/>
</dbReference>
<dbReference type="Pfam" id="PF01562">
    <property type="entry name" value="Pep_M12B_propep"/>
    <property type="match status" value="1"/>
</dbReference>
<dbReference type="Pfam" id="PF08686">
    <property type="entry name" value="PLAC"/>
    <property type="match status" value="1"/>
</dbReference>
<dbReference type="Pfam" id="PF01421">
    <property type="entry name" value="Reprolysin"/>
    <property type="match status" value="1"/>
</dbReference>
<dbReference type="Pfam" id="PF19030">
    <property type="entry name" value="TSP1_ADAMTS"/>
    <property type="match status" value="4"/>
</dbReference>
<dbReference type="Pfam" id="PF00090">
    <property type="entry name" value="TSP_1"/>
    <property type="match status" value="1"/>
</dbReference>
<dbReference type="PRINTS" id="PR01857">
    <property type="entry name" value="ADAMTSFAMILY"/>
</dbReference>
<dbReference type="SMART" id="SM00209">
    <property type="entry name" value="TSP1"/>
    <property type="match status" value="6"/>
</dbReference>
<dbReference type="SUPFAM" id="SSF55486">
    <property type="entry name" value="Metalloproteases ('zincins'), catalytic domain"/>
    <property type="match status" value="1"/>
</dbReference>
<dbReference type="SUPFAM" id="SSF82895">
    <property type="entry name" value="TSP-1 type 1 repeat"/>
    <property type="match status" value="5"/>
</dbReference>
<dbReference type="PROSITE" id="PS50215">
    <property type="entry name" value="ADAM_MEPRO"/>
    <property type="match status" value="1"/>
</dbReference>
<dbReference type="PROSITE" id="PS50900">
    <property type="entry name" value="PLAC"/>
    <property type="match status" value="1"/>
</dbReference>
<dbReference type="PROSITE" id="PS50092">
    <property type="entry name" value="TSP1"/>
    <property type="match status" value="5"/>
</dbReference>